<comment type="function">
    <text evidence="1">During virus replication, may deplete host UNG protein, and incude G2-M cell cycle arrest. Acts by targeting specific host proteins for degradation by the 26S proteasome, through association with the cellular CUL4A-DDB1 E3 ligase complex by direct interaction with host VPRPB/DCAF-1. Cell cycle arrest reportedly occurs within hours of infection and is not blocked by antiviral agents, suggesting that it is initiated by the VPR carried into the virion. Additionally, VPR induces apoptosis in a cell cycle dependent manner suggesting that these two effects are mechanistically linked. Detected in the serum and cerebrospinal fluid of AIDS patient, VPR may also induce cell death to bystander cells.</text>
</comment>
<comment type="function">
    <text evidence="1">During virus entry, plays a role in the transport of the viral pre-integration (PIC) complex to the host nucleus. This function is crucial for viral infection of non-dividing macrophages. May act directly at the nuclear pore complex, by binding nucleoporins phenylalanine-glycine (FG)-repeat regions.</text>
</comment>
<comment type="subunit">
    <text evidence="1">Homooligomer, may form homodimer. Interacts with p6-gag region of the Pr55 Gag precursor protein through a (Leu-X-X)4 motif near the C-terminus of the P6gag protein. Interacts with host UNG. May interact with host RAD23A/HHR23A. Interacts with host VPRBP/DCAF1, leading to hijack the CUL4A-RBX1-DDB1-DCAF1/VPRBP complex, mediating ubiquitination of host proteins such as TERT and ZGPAT and arrest of the cell cycle in G2 phase.</text>
</comment>
<comment type="subcellular location">
    <subcellularLocation>
        <location evidence="1">Virion</location>
    </subcellularLocation>
    <subcellularLocation>
        <location evidence="1">Host nucleus</location>
    </subcellularLocation>
    <subcellularLocation>
        <location evidence="1">Host extracellular space</location>
    </subcellularLocation>
    <text evidence="1">Incorporation into virion is dependent on p6 GAG sequences. Lacks a canonical nuclear localization signal, thus import into nucleus may function independently of the human importin pathway. Detected in high quantity in the serum and cerebrospinal fluid of AIDS patient.</text>
</comment>
<comment type="PTM">
    <text evidence="1">Phosphorylated on several residues by host. These phosphorylations regulate VPR activity for the nuclear import of the HIV-1 pre-integration complex.</text>
</comment>
<comment type="miscellaneous">
    <text evidence="1">HIV-1 lineages are divided in three main groups, M (for Major), O (for Outlier), and N (for New, or Non-M, Non-O). The vast majority of strains found worldwide belong to the group M. Group O seems to be endemic to and largely confined to Cameroon and neighboring countries in West Central Africa, where these viruses represent a small minority of HIV-1 strains. The group N is represented by a limited number of isolates from Cameroonian persons. The group M is further subdivided in 9 clades or subtypes (A to D, F to H, J and K).</text>
</comment>
<comment type="similarity">
    <text evidence="1">Belongs to the HIV-1 VPR protein family.</text>
</comment>
<accession>P05927</accession>
<gene>
    <name evidence="1" type="primary">vpr</name>
</gene>
<protein>
    <recommendedName>
        <fullName evidence="1">Protein Vpr</fullName>
    </recommendedName>
    <alternativeName>
        <fullName evidence="1">R ORF protein</fullName>
    </alternativeName>
    <alternativeName>
        <fullName evidence="1">Viral protein R</fullName>
    </alternativeName>
</protein>
<evidence type="ECO:0000255" key="1">
    <source>
        <dbReference type="HAMAP-Rule" id="MF_04080"/>
    </source>
</evidence>
<name>VPR_HV1B5</name>
<proteinExistence type="inferred from homology"/>
<reference key="1">
    <citation type="journal article" date="1985" name="Nature">
        <title>Complete nucleotide sequence of the AIDS virus, HTLV-III.</title>
        <authorList>
            <person name="Ratner L."/>
            <person name="Haseltine W.A."/>
            <person name="Patarca R."/>
            <person name="Livak K.J."/>
            <person name="Starcich B.R."/>
            <person name="Josephs S.F."/>
            <person name="Doran E.R."/>
            <person name="Rafalski J.A."/>
            <person name="Whitehorn E.A."/>
            <person name="Baumeister K."/>
            <person name="Ivanoff L."/>
            <person name="Petteway S.R. Jr."/>
            <person name="Pearson M.L."/>
            <person name="Lautenberger J.A."/>
            <person name="Papas T.S."/>
            <person name="Ghrayeb J."/>
            <person name="Chang N.T."/>
            <person name="Gallo R.C."/>
            <person name="Wong-Staal F."/>
        </authorList>
    </citation>
    <scope>NUCLEOTIDE SEQUENCE [GENOMIC RNA]</scope>
</reference>
<feature type="chain" id="PRO_0000085435" description="Protein Vpr">
    <location>
        <begin position="1"/>
        <end position="78"/>
    </location>
</feature>
<feature type="region of interest" description="Homooligomerization" evidence="1">
    <location>
        <begin position="1"/>
        <end position="42"/>
    </location>
</feature>
<organismHost>
    <name type="scientific">Homo sapiens</name>
    <name type="common">Human</name>
    <dbReference type="NCBI Taxonomy" id="9606"/>
</organismHost>
<sequence>MEQAPEDQGPQRKPHNEWTLELLEELKNEAVRHFPRIWLHGLGQHIYETYGDTWAGVEAIIRILQQLLFIHFQNWVST</sequence>
<organism>
    <name type="scientific">Human immunodeficiency virus type 1 group M subtype B (isolate BH5)</name>
    <name type="common">HIV-1</name>
    <dbReference type="NCBI Taxonomy" id="11682"/>
    <lineage>
        <taxon>Viruses</taxon>
        <taxon>Riboviria</taxon>
        <taxon>Pararnavirae</taxon>
        <taxon>Artverviricota</taxon>
        <taxon>Revtraviricetes</taxon>
        <taxon>Ortervirales</taxon>
        <taxon>Retroviridae</taxon>
        <taxon>Orthoretrovirinae</taxon>
        <taxon>Lentivirus</taxon>
        <taxon>Human immunodeficiency virus type 1</taxon>
    </lineage>
</organism>
<dbReference type="EMBL" id="K02012">
    <property type="protein sequence ID" value="AAA44655.1"/>
    <property type="molecule type" value="Genomic_RNA"/>
</dbReference>
<dbReference type="SMR" id="P05927"/>
<dbReference type="GO" id="GO:0043657">
    <property type="term" value="C:host cell"/>
    <property type="evidence" value="ECO:0007669"/>
    <property type="project" value="GOC"/>
</dbReference>
<dbReference type="GO" id="GO:0042025">
    <property type="term" value="C:host cell nucleus"/>
    <property type="evidence" value="ECO:0007669"/>
    <property type="project" value="UniProtKB-SubCell"/>
</dbReference>
<dbReference type="GO" id="GO:0043655">
    <property type="term" value="C:host extracellular space"/>
    <property type="evidence" value="ECO:0007669"/>
    <property type="project" value="UniProtKB-SubCell"/>
</dbReference>
<dbReference type="GO" id="GO:0044423">
    <property type="term" value="C:virion component"/>
    <property type="evidence" value="ECO:0007669"/>
    <property type="project" value="UniProtKB-UniRule"/>
</dbReference>
<dbReference type="GO" id="GO:0006351">
    <property type="term" value="P:DNA-templated transcription"/>
    <property type="evidence" value="ECO:0007669"/>
    <property type="project" value="UniProtKB-UniRule"/>
</dbReference>
<dbReference type="GO" id="GO:0034220">
    <property type="term" value="P:monoatomic ion transmembrane transport"/>
    <property type="evidence" value="ECO:0007669"/>
    <property type="project" value="UniProtKB-KW"/>
</dbReference>
<dbReference type="GO" id="GO:0051260">
    <property type="term" value="P:protein homooligomerization"/>
    <property type="evidence" value="ECO:0007669"/>
    <property type="project" value="UniProtKB-UniRule"/>
</dbReference>
<dbReference type="GO" id="GO:0006355">
    <property type="term" value="P:regulation of DNA-templated transcription"/>
    <property type="evidence" value="ECO:0007669"/>
    <property type="project" value="UniProtKB-UniRule"/>
</dbReference>
<dbReference type="GO" id="GO:0046718">
    <property type="term" value="P:symbiont entry into host cell"/>
    <property type="evidence" value="ECO:0007669"/>
    <property type="project" value="UniProtKB-KW"/>
</dbReference>
<dbReference type="GO" id="GO:0052151">
    <property type="term" value="P:symbiont-mediated activation of host apoptosis"/>
    <property type="evidence" value="ECO:0007669"/>
    <property type="project" value="UniProtKB-UniRule"/>
</dbReference>
<dbReference type="GO" id="GO:0039592">
    <property type="term" value="P:symbiont-mediated arrest of host cell cycle during G2/M transition"/>
    <property type="evidence" value="ECO:0007669"/>
    <property type="project" value="UniProtKB-UniRule"/>
</dbReference>
<dbReference type="GO" id="GO:0075732">
    <property type="term" value="P:viral penetration into host nucleus"/>
    <property type="evidence" value="ECO:0007669"/>
    <property type="project" value="UniProtKB-UniRule"/>
</dbReference>
<dbReference type="Gene3D" id="6.10.210.10">
    <property type="match status" value="1"/>
</dbReference>
<dbReference type="Gene3D" id="1.20.5.90">
    <property type="entry name" value="VpR/VpX protein, C-terminal domain"/>
    <property type="match status" value="1"/>
</dbReference>
<dbReference type="HAMAP" id="MF_04080">
    <property type="entry name" value="HIV_VPR"/>
    <property type="match status" value="1"/>
</dbReference>
<dbReference type="InterPro" id="IPR000012">
    <property type="entry name" value="RetroV_VpR/X"/>
</dbReference>
<dbReference type="Pfam" id="PF00522">
    <property type="entry name" value="VPR"/>
    <property type="match status" value="1"/>
</dbReference>
<dbReference type="PRINTS" id="PR00444">
    <property type="entry name" value="HIVVPRVPX"/>
</dbReference>
<keyword id="KW-0010">Activator</keyword>
<keyword id="KW-0014">AIDS</keyword>
<keyword id="KW-0053">Apoptosis</keyword>
<keyword id="KW-0131">Cell cycle</keyword>
<keyword id="KW-1079">Host G2/M cell cycle arrest by virus</keyword>
<keyword id="KW-1048">Host nucleus</keyword>
<keyword id="KW-0945">Host-virus interaction</keyword>
<keyword id="KW-0407">Ion channel</keyword>
<keyword id="KW-0406">Ion transport</keyword>
<keyword id="KW-1121">Modulation of host cell cycle by virus</keyword>
<keyword id="KW-0597">Phosphoprotein</keyword>
<keyword id="KW-0804">Transcription</keyword>
<keyword id="KW-0805">Transcription regulation</keyword>
<keyword id="KW-0813">Transport</keyword>
<keyword id="KW-1163">Viral penetration into host nucleus</keyword>
<keyword id="KW-0946">Virion</keyword>
<keyword id="KW-1160">Virus entry into host cell</keyword>